<feature type="chain" id="PRO_0000146060" description="Phosphoglycerate kinase">
    <location>
        <begin position="1"/>
        <end position="416"/>
    </location>
</feature>
<feature type="binding site" evidence="1">
    <location>
        <begin position="28"/>
        <end position="30"/>
    </location>
    <ligand>
        <name>substrate</name>
    </ligand>
</feature>
<feature type="binding site" evidence="1">
    <location>
        <position position="44"/>
    </location>
    <ligand>
        <name>substrate</name>
    </ligand>
</feature>
<feature type="binding site" evidence="1">
    <location>
        <begin position="65"/>
        <end position="68"/>
    </location>
    <ligand>
        <name>substrate</name>
    </ligand>
</feature>
<feature type="binding site" evidence="1">
    <location>
        <position position="122"/>
    </location>
    <ligand>
        <name>substrate</name>
    </ligand>
</feature>
<feature type="binding site" evidence="1">
    <location>
        <position position="162"/>
    </location>
    <ligand>
        <name>substrate</name>
    </ligand>
</feature>
<feature type="binding site" evidence="1">
    <location>
        <position position="337"/>
    </location>
    <ligand>
        <name>ATP</name>
        <dbReference type="ChEBI" id="CHEBI:30616"/>
    </ligand>
</feature>
<feature type="binding site" evidence="1">
    <location>
        <begin position="362"/>
        <end position="365"/>
    </location>
    <ligand>
        <name>ATP</name>
        <dbReference type="ChEBI" id="CHEBI:30616"/>
    </ligand>
</feature>
<reference key="1">
    <citation type="journal article" date="2002" name="J. Mol. Microbiol. Biotechnol.">
        <title>The genome of Methanosarcina mazei: evidence for lateral gene transfer between Bacteria and Archaea.</title>
        <authorList>
            <person name="Deppenmeier U."/>
            <person name="Johann A."/>
            <person name="Hartsch T."/>
            <person name="Merkl R."/>
            <person name="Schmitz R.A."/>
            <person name="Martinez-Arias R."/>
            <person name="Henne A."/>
            <person name="Wiezer A."/>
            <person name="Baeumer S."/>
            <person name="Jacobi C."/>
            <person name="Brueggemann H."/>
            <person name="Lienard T."/>
            <person name="Christmann A."/>
            <person name="Boemecke M."/>
            <person name="Steckel S."/>
            <person name="Bhattacharyya A."/>
            <person name="Lykidis A."/>
            <person name="Overbeek R."/>
            <person name="Klenk H.-P."/>
            <person name="Gunsalus R.P."/>
            <person name="Fritz H.-J."/>
            <person name="Gottschalk G."/>
        </authorList>
    </citation>
    <scope>NUCLEOTIDE SEQUENCE [LARGE SCALE GENOMIC DNA]</scope>
    <source>
        <strain>ATCC BAA-159 / DSM 3647 / Goe1 / Go1 / JCM 11833 / OCM 88</strain>
    </source>
</reference>
<name>PGK_METMA</name>
<keyword id="KW-0067">ATP-binding</keyword>
<keyword id="KW-0963">Cytoplasm</keyword>
<keyword id="KW-0324">Glycolysis</keyword>
<keyword id="KW-0418">Kinase</keyword>
<keyword id="KW-0547">Nucleotide-binding</keyword>
<keyword id="KW-0808">Transferase</keyword>
<accession>Q8PZK7</accession>
<gene>
    <name evidence="1" type="primary">pgk</name>
    <name type="ordered locus">MM_0485</name>
</gene>
<organism>
    <name type="scientific">Methanosarcina mazei (strain ATCC BAA-159 / DSM 3647 / Goe1 / Go1 / JCM 11833 / OCM 88)</name>
    <name type="common">Methanosarcina frisia</name>
    <dbReference type="NCBI Taxonomy" id="192952"/>
    <lineage>
        <taxon>Archaea</taxon>
        <taxon>Methanobacteriati</taxon>
        <taxon>Methanobacteriota</taxon>
        <taxon>Stenosarchaea group</taxon>
        <taxon>Methanomicrobia</taxon>
        <taxon>Methanosarcinales</taxon>
        <taxon>Methanosarcinaceae</taxon>
        <taxon>Methanosarcina</taxon>
    </lineage>
</organism>
<proteinExistence type="inferred from homology"/>
<comment type="catalytic activity">
    <reaction evidence="1">
        <text>(2R)-3-phosphoglycerate + ATP = (2R)-3-phospho-glyceroyl phosphate + ADP</text>
        <dbReference type="Rhea" id="RHEA:14801"/>
        <dbReference type="ChEBI" id="CHEBI:30616"/>
        <dbReference type="ChEBI" id="CHEBI:57604"/>
        <dbReference type="ChEBI" id="CHEBI:58272"/>
        <dbReference type="ChEBI" id="CHEBI:456216"/>
        <dbReference type="EC" id="2.7.2.3"/>
    </reaction>
</comment>
<comment type="pathway">
    <text evidence="1">Carbohydrate degradation; glycolysis; pyruvate from D-glyceraldehyde 3-phosphate: step 2/5.</text>
</comment>
<comment type="subunit">
    <text evidence="1">Monomer.</text>
</comment>
<comment type="subcellular location">
    <subcellularLocation>
        <location evidence="1">Cytoplasm</location>
    </subcellularLocation>
</comment>
<comment type="similarity">
    <text evidence="1">Belongs to the phosphoglycerate kinase family.</text>
</comment>
<evidence type="ECO:0000255" key="1">
    <source>
        <dbReference type="HAMAP-Rule" id="MF_00145"/>
    </source>
</evidence>
<dbReference type="EC" id="2.7.2.3" evidence="1"/>
<dbReference type="EMBL" id="AE008384">
    <property type="protein sequence ID" value="AAM30181.1"/>
    <property type="molecule type" value="Genomic_DNA"/>
</dbReference>
<dbReference type="RefSeq" id="WP_011032438.1">
    <property type="nucleotide sequence ID" value="NC_003901.1"/>
</dbReference>
<dbReference type="SMR" id="Q8PZK7"/>
<dbReference type="GeneID" id="82159494"/>
<dbReference type="KEGG" id="mma:MM_0485"/>
<dbReference type="PATRIC" id="fig|192952.21.peg.582"/>
<dbReference type="eggNOG" id="arCOG00496">
    <property type="taxonomic scope" value="Archaea"/>
</dbReference>
<dbReference type="HOGENOM" id="CLU_025427_0_2_2"/>
<dbReference type="UniPathway" id="UPA00109">
    <property type="reaction ID" value="UER00185"/>
</dbReference>
<dbReference type="Proteomes" id="UP000000595">
    <property type="component" value="Chromosome"/>
</dbReference>
<dbReference type="GO" id="GO:0005829">
    <property type="term" value="C:cytosol"/>
    <property type="evidence" value="ECO:0007669"/>
    <property type="project" value="TreeGrafter"/>
</dbReference>
<dbReference type="GO" id="GO:0043531">
    <property type="term" value="F:ADP binding"/>
    <property type="evidence" value="ECO:0007669"/>
    <property type="project" value="TreeGrafter"/>
</dbReference>
<dbReference type="GO" id="GO:0005524">
    <property type="term" value="F:ATP binding"/>
    <property type="evidence" value="ECO:0007669"/>
    <property type="project" value="UniProtKB-KW"/>
</dbReference>
<dbReference type="GO" id="GO:0004618">
    <property type="term" value="F:phosphoglycerate kinase activity"/>
    <property type="evidence" value="ECO:0007669"/>
    <property type="project" value="UniProtKB-UniRule"/>
</dbReference>
<dbReference type="GO" id="GO:0006094">
    <property type="term" value="P:gluconeogenesis"/>
    <property type="evidence" value="ECO:0007669"/>
    <property type="project" value="TreeGrafter"/>
</dbReference>
<dbReference type="GO" id="GO:0006096">
    <property type="term" value="P:glycolytic process"/>
    <property type="evidence" value="ECO:0007669"/>
    <property type="project" value="UniProtKB-UniRule"/>
</dbReference>
<dbReference type="FunFam" id="3.40.50.1260:FF:000006">
    <property type="entry name" value="Phosphoglycerate kinase"/>
    <property type="match status" value="1"/>
</dbReference>
<dbReference type="FunFam" id="3.40.50.1260:FF:000012">
    <property type="entry name" value="Phosphoglycerate kinase"/>
    <property type="match status" value="1"/>
</dbReference>
<dbReference type="Gene3D" id="3.40.50.1260">
    <property type="entry name" value="Phosphoglycerate kinase, N-terminal domain"/>
    <property type="match status" value="2"/>
</dbReference>
<dbReference type="HAMAP" id="MF_00145">
    <property type="entry name" value="Phosphoglyc_kinase"/>
    <property type="match status" value="1"/>
</dbReference>
<dbReference type="InterPro" id="IPR001576">
    <property type="entry name" value="Phosphoglycerate_kinase"/>
</dbReference>
<dbReference type="InterPro" id="IPR015824">
    <property type="entry name" value="Phosphoglycerate_kinase_N"/>
</dbReference>
<dbReference type="InterPro" id="IPR036043">
    <property type="entry name" value="Phosphoglycerate_kinase_sf"/>
</dbReference>
<dbReference type="PANTHER" id="PTHR11406">
    <property type="entry name" value="PHOSPHOGLYCERATE KINASE"/>
    <property type="match status" value="1"/>
</dbReference>
<dbReference type="PANTHER" id="PTHR11406:SF23">
    <property type="entry name" value="PHOSPHOGLYCERATE KINASE 1, CHLOROPLASTIC-RELATED"/>
    <property type="match status" value="1"/>
</dbReference>
<dbReference type="Pfam" id="PF00162">
    <property type="entry name" value="PGK"/>
    <property type="match status" value="1"/>
</dbReference>
<dbReference type="PIRSF" id="PIRSF000724">
    <property type="entry name" value="Pgk"/>
    <property type="match status" value="1"/>
</dbReference>
<dbReference type="PRINTS" id="PR00477">
    <property type="entry name" value="PHGLYCKINASE"/>
</dbReference>
<dbReference type="SUPFAM" id="SSF53748">
    <property type="entry name" value="Phosphoglycerate kinase"/>
    <property type="match status" value="1"/>
</dbReference>
<sequence>MLRVMTSRNFLTIDDFDIRGKTILLRVDMNSPMDTQGHILDDMRIRSHIATLKDLESAKVVVLAHQSRPGKKDFTTMKPHAHLLSRYLGRQVTYVDDIFGTFAKTQIASMEDGDVIMLENVRFYSEESLERTTAEQANTFMVKKLAPFVDIFLNDAFAVSHRSHLSVVGFTEVLPSGAGRVMEKELISLEKGVKSGERPSVFVLGGAKVDDSLRVTENVLTNGGADRVLLTGVVANVALAASGVNIGKANLDFIKSQGYEDQIERARGLLAKFEDKIGLPKDVALNDNKKRVEAPISELNSDSLPINDIGLETIVDYTNEIQNAKTVVLNGPAGVSEIEDFALGTHEIIKAAIKSDFSIIGGGHISVEVAHLGLEHRFSHISTGGGACIDFLAGEKLPGVEALKAAYNKYQEAKKL</sequence>
<protein>
    <recommendedName>
        <fullName evidence="1">Phosphoglycerate kinase</fullName>
        <ecNumber evidence="1">2.7.2.3</ecNumber>
    </recommendedName>
</protein>